<feature type="chain" id="PRO_1000071132" description="Serine hydroxymethyltransferase">
    <location>
        <begin position="1"/>
        <end position="418"/>
    </location>
</feature>
<feature type="binding site" evidence="1">
    <location>
        <position position="120"/>
    </location>
    <ligand>
        <name>(6S)-5,6,7,8-tetrahydrofolate</name>
        <dbReference type="ChEBI" id="CHEBI:57453"/>
    </ligand>
</feature>
<feature type="binding site" evidence="1">
    <location>
        <begin position="124"/>
        <end position="126"/>
    </location>
    <ligand>
        <name>(6S)-5,6,7,8-tetrahydrofolate</name>
        <dbReference type="ChEBI" id="CHEBI:57453"/>
    </ligand>
</feature>
<feature type="binding site" evidence="1">
    <location>
        <begin position="353"/>
        <end position="355"/>
    </location>
    <ligand>
        <name>(6S)-5,6,7,8-tetrahydrofolate</name>
        <dbReference type="ChEBI" id="CHEBI:57453"/>
    </ligand>
</feature>
<feature type="site" description="Plays an important role in substrate specificity" evidence="1">
    <location>
        <position position="228"/>
    </location>
</feature>
<feature type="modified residue" description="N6-(pyridoxal phosphate)lysine" evidence="1">
    <location>
        <position position="229"/>
    </location>
</feature>
<keyword id="KW-0028">Amino-acid biosynthesis</keyword>
<keyword id="KW-0963">Cytoplasm</keyword>
<keyword id="KW-0554">One-carbon metabolism</keyword>
<keyword id="KW-0663">Pyridoxal phosphate</keyword>
<keyword id="KW-0808">Transferase</keyword>
<proteinExistence type="inferred from homology"/>
<protein>
    <recommendedName>
        <fullName evidence="1">Serine hydroxymethyltransferase</fullName>
        <shortName evidence="1">SHMT</shortName>
        <shortName evidence="1">Serine methylase</shortName>
        <ecNumber evidence="1">2.1.2.1</ecNumber>
    </recommendedName>
</protein>
<dbReference type="EC" id="2.1.2.1" evidence="1"/>
<dbReference type="EMBL" id="CP000713">
    <property type="protein sequence ID" value="ABQ95023.1"/>
    <property type="molecule type" value="Genomic_DNA"/>
</dbReference>
<dbReference type="SMR" id="A5WH82"/>
<dbReference type="STRING" id="349106.PsycPRwf_2083"/>
<dbReference type="KEGG" id="prw:PsycPRwf_2083"/>
<dbReference type="eggNOG" id="COG0112">
    <property type="taxonomic scope" value="Bacteria"/>
</dbReference>
<dbReference type="HOGENOM" id="CLU_022477_2_1_6"/>
<dbReference type="UniPathway" id="UPA00193"/>
<dbReference type="UniPathway" id="UPA00288">
    <property type="reaction ID" value="UER01023"/>
</dbReference>
<dbReference type="GO" id="GO:0005829">
    <property type="term" value="C:cytosol"/>
    <property type="evidence" value="ECO:0007669"/>
    <property type="project" value="TreeGrafter"/>
</dbReference>
<dbReference type="GO" id="GO:0004372">
    <property type="term" value="F:glycine hydroxymethyltransferase activity"/>
    <property type="evidence" value="ECO:0007669"/>
    <property type="project" value="UniProtKB-UniRule"/>
</dbReference>
<dbReference type="GO" id="GO:0030170">
    <property type="term" value="F:pyridoxal phosphate binding"/>
    <property type="evidence" value="ECO:0007669"/>
    <property type="project" value="UniProtKB-UniRule"/>
</dbReference>
<dbReference type="GO" id="GO:0019264">
    <property type="term" value="P:glycine biosynthetic process from serine"/>
    <property type="evidence" value="ECO:0007669"/>
    <property type="project" value="UniProtKB-UniRule"/>
</dbReference>
<dbReference type="GO" id="GO:0035999">
    <property type="term" value="P:tetrahydrofolate interconversion"/>
    <property type="evidence" value="ECO:0007669"/>
    <property type="project" value="UniProtKB-UniRule"/>
</dbReference>
<dbReference type="CDD" id="cd00378">
    <property type="entry name" value="SHMT"/>
    <property type="match status" value="1"/>
</dbReference>
<dbReference type="FunFam" id="3.40.640.10:FF:000001">
    <property type="entry name" value="Serine hydroxymethyltransferase"/>
    <property type="match status" value="1"/>
</dbReference>
<dbReference type="FunFam" id="3.90.1150.10:FF:000003">
    <property type="entry name" value="Serine hydroxymethyltransferase"/>
    <property type="match status" value="1"/>
</dbReference>
<dbReference type="Gene3D" id="3.90.1150.10">
    <property type="entry name" value="Aspartate Aminotransferase, domain 1"/>
    <property type="match status" value="1"/>
</dbReference>
<dbReference type="Gene3D" id="3.40.640.10">
    <property type="entry name" value="Type I PLP-dependent aspartate aminotransferase-like (Major domain)"/>
    <property type="match status" value="1"/>
</dbReference>
<dbReference type="HAMAP" id="MF_00051">
    <property type="entry name" value="SHMT"/>
    <property type="match status" value="1"/>
</dbReference>
<dbReference type="InterPro" id="IPR015424">
    <property type="entry name" value="PyrdxlP-dep_Trfase"/>
</dbReference>
<dbReference type="InterPro" id="IPR015421">
    <property type="entry name" value="PyrdxlP-dep_Trfase_major"/>
</dbReference>
<dbReference type="InterPro" id="IPR015422">
    <property type="entry name" value="PyrdxlP-dep_Trfase_small"/>
</dbReference>
<dbReference type="InterPro" id="IPR001085">
    <property type="entry name" value="Ser_HO-MeTrfase"/>
</dbReference>
<dbReference type="InterPro" id="IPR049943">
    <property type="entry name" value="Ser_HO-MeTrfase-like"/>
</dbReference>
<dbReference type="InterPro" id="IPR019798">
    <property type="entry name" value="Ser_HO-MeTrfase_PLP_BS"/>
</dbReference>
<dbReference type="InterPro" id="IPR039429">
    <property type="entry name" value="SHMT-like_dom"/>
</dbReference>
<dbReference type="NCBIfam" id="NF000586">
    <property type="entry name" value="PRK00011.1"/>
    <property type="match status" value="1"/>
</dbReference>
<dbReference type="PANTHER" id="PTHR11680">
    <property type="entry name" value="SERINE HYDROXYMETHYLTRANSFERASE"/>
    <property type="match status" value="1"/>
</dbReference>
<dbReference type="PANTHER" id="PTHR11680:SF50">
    <property type="entry name" value="SERINE HYDROXYMETHYLTRANSFERASE"/>
    <property type="match status" value="1"/>
</dbReference>
<dbReference type="Pfam" id="PF00464">
    <property type="entry name" value="SHMT"/>
    <property type="match status" value="1"/>
</dbReference>
<dbReference type="PIRSF" id="PIRSF000412">
    <property type="entry name" value="SHMT"/>
    <property type="match status" value="1"/>
</dbReference>
<dbReference type="SUPFAM" id="SSF53383">
    <property type="entry name" value="PLP-dependent transferases"/>
    <property type="match status" value="1"/>
</dbReference>
<dbReference type="PROSITE" id="PS00096">
    <property type="entry name" value="SHMT"/>
    <property type="match status" value="1"/>
</dbReference>
<gene>
    <name evidence="1" type="primary">glyA</name>
    <name type="ordered locus">PsycPRwf_2083</name>
</gene>
<accession>A5WH82</accession>
<sequence length="418" mass="45582">MFKDISIKDYDPDLYQAMVSETKRQESHIELIASENYCSQAVMEAQGSDLTNKYAEGYPGKRYYGGCEYVDIVEQLAIDRAKELFGAEYANVQPHAGSQANSAVFLALLEAGDTVLGMSLDAGGHLTHGAHVNFSGINYNAVQYGLVEETGLIDYDEVERLAQEHKPKMIIAGFSAYSQVVDWQRFRDIADSVGAYLFVDMAHVAGLVAAGVYPSPVPFADVVTTTTHKTLRGPRSGLILSRDDKLAKKLNSAVFPGNQGGPLMHAIAAKAVCFKEALQDDFKTYQQQVVKNAKAMAKVIQERGYEIISGGTENHLMLISLVKQEMTGKEADKWLGDAGITVNKNAVPNDPKSPFVTSGIRIGTPAITTRGFNEAQAADLAGWICDVLDSRGDEKVLADTRAKVEKICAELPVYERNQ</sequence>
<organism>
    <name type="scientific">Psychrobacter sp. (strain PRwf-1)</name>
    <dbReference type="NCBI Taxonomy" id="349106"/>
    <lineage>
        <taxon>Bacteria</taxon>
        <taxon>Pseudomonadati</taxon>
        <taxon>Pseudomonadota</taxon>
        <taxon>Gammaproteobacteria</taxon>
        <taxon>Moraxellales</taxon>
        <taxon>Moraxellaceae</taxon>
        <taxon>Psychrobacter</taxon>
    </lineage>
</organism>
<evidence type="ECO:0000255" key="1">
    <source>
        <dbReference type="HAMAP-Rule" id="MF_00051"/>
    </source>
</evidence>
<comment type="function">
    <text evidence="1">Catalyzes the reversible interconversion of serine and glycine with tetrahydrofolate (THF) serving as the one-carbon carrier. This reaction serves as the major source of one-carbon groups required for the biosynthesis of purines, thymidylate, methionine, and other important biomolecules. Also exhibits THF-independent aldolase activity toward beta-hydroxyamino acids, producing glycine and aldehydes, via a retro-aldol mechanism.</text>
</comment>
<comment type="catalytic activity">
    <reaction evidence="1">
        <text>(6R)-5,10-methylene-5,6,7,8-tetrahydrofolate + glycine + H2O = (6S)-5,6,7,8-tetrahydrofolate + L-serine</text>
        <dbReference type="Rhea" id="RHEA:15481"/>
        <dbReference type="ChEBI" id="CHEBI:15377"/>
        <dbReference type="ChEBI" id="CHEBI:15636"/>
        <dbReference type="ChEBI" id="CHEBI:33384"/>
        <dbReference type="ChEBI" id="CHEBI:57305"/>
        <dbReference type="ChEBI" id="CHEBI:57453"/>
        <dbReference type="EC" id="2.1.2.1"/>
    </reaction>
</comment>
<comment type="cofactor">
    <cofactor evidence="1">
        <name>pyridoxal 5'-phosphate</name>
        <dbReference type="ChEBI" id="CHEBI:597326"/>
    </cofactor>
</comment>
<comment type="pathway">
    <text evidence="1">One-carbon metabolism; tetrahydrofolate interconversion.</text>
</comment>
<comment type="pathway">
    <text evidence="1">Amino-acid biosynthesis; glycine biosynthesis; glycine from L-serine: step 1/1.</text>
</comment>
<comment type="subunit">
    <text evidence="1">Homodimer.</text>
</comment>
<comment type="subcellular location">
    <subcellularLocation>
        <location evidence="1">Cytoplasm</location>
    </subcellularLocation>
</comment>
<comment type="similarity">
    <text evidence="1">Belongs to the SHMT family.</text>
</comment>
<reference key="1">
    <citation type="submission" date="2007-05" db="EMBL/GenBank/DDBJ databases">
        <title>Complete sequence of chromosome of Psychrobacter sp. PRwf-1.</title>
        <authorList>
            <consortium name="US DOE Joint Genome Institute"/>
            <person name="Copeland A."/>
            <person name="Lucas S."/>
            <person name="Lapidus A."/>
            <person name="Barry K."/>
            <person name="Detter J.C."/>
            <person name="Glavina del Rio T."/>
            <person name="Hammon N."/>
            <person name="Israni S."/>
            <person name="Dalin E."/>
            <person name="Tice H."/>
            <person name="Pitluck S."/>
            <person name="Chain P."/>
            <person name="Malfatti S."/>
            <person name="Shin M."/>
            <person name="Vergez L."/>
            <person name="Schmutz J."/>
            <person name="Larimer F."/>
            <person name="Land M."/>
            <person name="Hauser L."/>
            <person name="Kyrpides N."/>
            <person name="Kim E."/>
            <person name="Tiedje J."/>
            <person name="Richardson P."/>
        </authorList>
    </citation>
    <scope>NUCLEOTIDE SEQUENCE [LARGE SCALE GENOMIC DNA]</scope>
    <source>
        <strain>PRwf-1</strain>
    </source>
</reference>
<name>GLYA_PSYWF</name>